<evidence type="ECO:0000250" key="1"/>
<evidence type="ECO:0000305" key="2"/>
<dbReference type="EC" id="4.2.1.136"/>
<dbReference type="EC" id="5.1.99.6"/>
<dbReference type="EMBL" id="BA000039">
    <property type="protein sequence ID" value="BAC09947.1"/>
    <property type="molecule type" value="Genomic_DNA"/>
</dbReference>
<dbReference type="RefSeq" id="NP_683185.1">
    <property type="nucleotide sequence ID" value="NC_004113.1"/>
</dbReference>
<dbReference type="RefSeq" id="WP_011058227.1">
    <property type="nucleotide sequence ID" value="NC_004113.1"/>
</dbReference>
<dbReference type="SMR" id="Q8DGC3"/>
<dbReference type="STRING" id="197221.gene:10749015"/>
<dbReference type="EnsemblBacteria" id="BAC09947">
    <property type="protein sequence ID" value="BAC09947"/>
    <property type="gene ID" value="BAC09947"/>
</dbReference>
<dbReference type="KEGG" id="tel:tll2395"/>
<dbReference type="PATRIC" id="fig|197221.4.peg.2516"/>
<dbReference type="eggNOG" id="COG0062">
    <property type="taxonomic scope" value="Bacteria"/>
</dbReference>
<dbReference type="eggNOG" id="COG0063">
    <property type="taxonomic scope" value="Bacteria"/>
</dbReference>
<dbReference type="Proteomes" id="UP000000440">
    <property type="component" value="Chromosome"/>
</dbReference>
<dbReference type="GO" id="GO:0052855">
    <property type="term" value="F:ADP-dependent NAD(P)H-hydrate dehydratase activity"/>
    <property type="evidence" value="ECO:0007669"/>
    <property type="project" value="UniProtKB-UniRule"/>
</dbReference>
<dbReference type="GO" id="GO:0005524">
    <property type="term" value="F:ATP binding"/>
    <property type="evidence" value="ECO:0007669"/>
    <property type="project" value="UniProtKB-KW"/>
</dbReference>
<dbReference type="GO" id="GO:0046872">
    <property type="term" value="F:metal ion binding"/>
    <property type="evidence" value="ECO:0007669"/>
    <property type="project" value="UniProtKB-KW"/>
</dbReference>
<dbReference type="GO" id="GO:0052856">
    <property type="term" value="F:NAD(P)HX epimerase activity"/>
    <property type="evidence" value="ECO:0007669"/>
    <property type="project" value="UniProtKB-UniRule"/>
</dbReference>
<dbReference type="GO" id="GO:0110051">
    <property type="term" value="P:metabolite repair"/>
    <property type="evidence" value="ECO:0007669"/>
    <property type="project" value="TreeGrafter"/>
</dbReference>
<dbReference type="GO" id="GO:0046496">
    <property type="term" value="P:nicotinamide nucleotide metabolic process"/>
    <property type="evidence" value="ECO:0007669"/>
    <property type="project" value="UniProtKB-UniRule"/>
</dbReference>
<dbReference type="CDD" id="cd01171">
    <property type="entry name" value="YXKO-related"/>
    <property type="match status" value="1"/>
</dbReference>
<dbReference type="Gene3D" id="3.40.1190.20">
    <property type="match status" value="1"/>
</dbReference>
<dbReference type="Gene3D" id="3.40.50.10260">
    <property type="entry name" value="YjeF N-terminal domain"/>
    <property type="match status" value="1"/>
</dbReference>
<dbReference type="HAMAP" id="MF_01965">
    <property type="entry name" value="NADHX_dehydratase"/>
    <property type="match status" value="1"/>
</dbReference>
<dbReference type="HAMAP" id="MF_01966">
    <property type="entry name" value="NADHX_epimerase"/>
    <property type="match status" value="1"/>
</dbReference>
<dbReference type="InterPro" id="IPR017953">
    <property type="entry name" value="Carbohydrate_kinase_pred_CS"/>
</dbReference>
<dbReference type="InterPro" id="IPR000631">
    <property type="entry name" value="CARKD"/>
</dbReference>
<dbReference type="InterPro" id="IPR030677">
    <property type="entry name" value="Nnr"/>
</dbReference>
<dbReference type="InterPro" id="IPR029056">
    <property type="entry name" value="Ribokinase-like"/>
</dbReference>
<dbReference type="InterPro" id="IPR004443">
    <property type="entry name" value="YjeF_N_dom"/>
</dbReference>
<dbReference type="InterPro" id="IPR036652">
    <property type="entry name" value="YjeF_N_dom_sf"/>
</dbReference>
<dbReference type="NCBIfam" id="TIGR00196">
    <property type="entry name" value="yjeF_cterm"/>
    <property type="match status" value="1"/>
</dbReference>
<dbReference type="NCBIfam" id="TIGR00197">
    <property type="entry name" value="yjeF_nterm"/>
    <property type="match status" value="1"/>
</dbReference>
<dbReference type="PANTHER" id="PTHR12592:SF0">
    <property type="entry name" value="ATP-DEPENDENT (S)-NAD(P)H-HYDRATE DEHYDRATASE"/>
    <property type="match status" value="1"/>
</dbReference>
<dbReference type="PANTHER" id="PTHR12592">
    <property type="entry name" value="ATP-DEPENDENT (S)-NAD(P)H-HYDRATE DEHYDRATASE FAMILY MEMBER"/>
    <property type="match status" value="1"/>
</dbReference>
<dbReference type="Pfam" id="PF01256">
    <property type="entry name" value="Carb_kinase"/>
    <property type="match status" value="1"/>
</dbReference>
<dbReference type="Pfam" id="PF03853">
    <property type="entry name" value="YjeF_N"/>
    <property type="match status" value="1"/>
</dbReference>
<dbReference type="PIRSF" id="PIRSF017184">
    <property type="entry name" value="Nnr"/>
    <property type="match status" value="1"/>
</dbReference>
<dbReference type="SUPFAM" id="SSF53613">
    <property type="entry name" value="Ribokinase-like"/>
    <property type="match status" value="1"/>
</dbReference>
<dbReference type="SUPFAM" id="SSF64153">
    <property type="entry name" value="YjeF N-terminal domain-like"/>
    <property type="match status" value="1"/>
</dbReference>
<dbReference type="PROSITE" id="PS01050">
    <property type="entry name" value="YJEF_C_2"/>
    <property type="match status" value="1"/>
</dbReference>
<dbReference type="PROSITE" id="PS51383">
    <property type="entry name" value="YJEF_C_3"/>
    <property type="match status" value="1"/>
</dbReference>
<dbReference type="PROSITE" id="PS51385">
    <property type="entry name" value="YJEF_N"/>
    <property type="match status" value="1"/>
</dbReference>
<comment type="function">
    <text evidence="1">Bifunctional enzyme that catalyzes the epimerization of the S- and R-forms of NAD(P)HX and the dehydration of the S-form of NAD(P)HX at the expense of ADP, which is converted to AMP. This allows the repair of both epimers of NAD(P)HX, a damaged form of NAD(P)H that is a result of enzymatic or heat-dependent hydration (By similarity).</text>
</comment>
<comment type="catalytic activity">
    <reaction>
        <text>(6S)-NADHX + ADP = AMP + phosphate + NADH + H(+)</text>
        <dbReference type="Rhea" id="RHEA:32223"/>
        <dbReference type="ChEBI" id="CHEBI:15378"/>
        <dbReference type="ChEBI" id="CHEBI:43474"/>
        <dbReference type="ChEBI" id="CHEBI:57945"/>
        <dbReference type="ChEBI" id="CHEBI:64074"/>
        <dbReference type="ChEBI" id="CHEBI:456215"/>
        <dbReference type="ChEBI" id="CHEBI:456216"/>
        <dbReference type="EC" id="4.2.1.136"/>
    </reaction>
</comment>
<comment type="catalytic activity">
    <reaction>
        <text>(6S)-NADPHX + ADP = AMP + phosphate + NADPH + H(+)</text>
        <dbReference type="Rhea" id="RHEA:32235"/>
        <dbReference type="ChEBI" id="CHEBI:15378"/>
        <dbReference type="ChEBI" id="CHEBI:43474"/>
        <dbReference type="ChEBI" id="CHEBI:57783"/>
        <dbReference type="ChEBI" id="CHEBI:64076"/>
        <dbReference type="ChEBI" id="CHEBI:456215"/>
        <dbReference type="ChEBI" id="CHEBI:456216"/>
        <dbReference type="EC" id="4.2.1.136"/>
    </reaction>
</comment>
<comment type="catalytic activity">
    <reaction>
        <text>(6R)-NADHX = (6S)-NADHX</text>
        <dbReference type="Rhea" id="RHEA:32215"/>
        <dbReference type="ChEBI" id="CHEBI:64074"/>
        <dbReference type="ChEBI" id="CHEBI:64075"/>
        <dbReference type="EC" id="5.1.99.6"/>
    </reaction>
</comment>
<comment type="catalytic activity">
    <reaction>
        <text>(6R)-NADPHX = (6S)-NADPHX</text>
        <dbReference type="Rhea" id="RHEA:32227"/>
        <dbReference type="ChEBI" id="CHEBI:64076"/>
        <dbReference type="ChEBI" id="CHEBI:64077"/>
        <dbReference type="EC" id="5.1.99.6"/>
    </reaction>
</comment>
<comment type="cofactor">
    <cofactor evidence="1">
        <name>K(+)</name>
        <dbReference type="ChEBI" id="CHEBI:29103"/>
    </cofactor>
    <text evidence="1">Binds 1 potassium ion per subunit.</text>
</comment>
<comment type="similarity">
    <text evidence="2">In the N-terminal section; belongs to the NnrE/AIBP family.</text>
</comment>
<comment type="similarity">
    <text evidence="2">In the C-terminal section; belongs to the NnrD/CARKD family.</text>
</comment>
<gene>
    <name type="primary">nnr</name>
    <name type="ordered locus">tll2395</name>
</gene>
<name>NNR_THEVB</name>
<protein>
    <recommendedName>
        <fullName>Bifunctional NAD(P)H-hydrate repair enzyme Nnr</fullName>
    </recommendedName>
    <alternativeName>
        <fullName>Nicotinamide nucleotide repair protein</fullName>
    </alternativeName>
    <domain>
        <recommendedName>
            <fullName>ADP-dependent (S)-NAD(P)H-hydrate dehydratase</fullName>
            <ecNumber>4.2.1.136</ecNumber>
        </recommendedName>
        <alternativeName>
            <fullName>ADP-dependent NAD(P)HX dehydratase</fullName>
        </alternativeName>
    </domain>
    <domain>
        <recommendedName>
            <fullName>NAD(P)H-hydrate epimerase</fullName>
            <ecNumber>5.1.99.6</ecNumber>
        </recommendedName>
        <alternativeName>
            <fullName>NAD(P)HX epimerase</fullName>
        </alternativeName>
    </domain>
</protein>
<keyword id="KW-0067">ATP-binding</keyword>
<keyword id="KW-0413">Isomerase</keyword>
<keyword id="KW-0456">Lyase</keyword>
<keyword id="KW-0479">Metal-binding</keyword>
<keyword id="KW-0511">Multifunctional enzyme</keyword>
<keyword id="KW-0520">NAD</keyword>
<keyword id="KW-0521">NADP</keyword>
<keyword id="KW-0547">Nucleotide-binding</keyword>
<keyword id="KW-0630">Potassium</keyword>
<keyword id="KW-1185">Reference proteome</keyword>
<organism>
    <name type="scientific">Thermosynechococcus vestitus (strain NIES-2133 / IAM M-273 / BP-1)</name>
    <dbReference type="NCBI Taxonomy" id="197221"/>
    <lineage>
        <taxon>Bacteria</taxon>
        <taxon>Bacillati</taxon>
        <taxon>Cyanobacteriota</taxon>
        <taxon>Cyanophyceae</taxon>
        <taxon>Acaryochloridales</taxon>
        <taxon>Thermosynechococcaceae</taxon>
        <taxon>Thermosynechococcus</taxon>
    </lineage>
</organism>
<proteinExistence type="inferred from homology"/>
<reference key="1">
    <citation type="journal article" date="2002" name="DNA Res.">
        <title>Complete genome structure of the thermophilic cyanobacterium Thermosynechococcus elongatus BP-1.</title>
        <authorList>
            <person name="Nakamura Y."/>
            <person name="Kaneko T."/>
            <person name="Sato S."/>
            <person name="Ikeuchi M."/>
            <person name="Katoh H."/>
            <person name="Sasamoto S."/>
            <person name="Watanabe A."/>
            <person name="Iriguchi M."/>
            <person name="Kawashima K."/>
            <person name="Kimura T."/>
            <person name="Kishida Y."/>
            <person name="Kiyokawa C."/>
            <person name="Kohara M."/>
            <person name="Matsumoto M."/>
            <person name="Matsuno A."/>
            <person name="Nakazaki N."/>
            <person name="Shimpo S."/>
            <person name="Sugimoto M."/>
            <person name="Takeuchi C."/>
            <person name="Yamada M."/>
            <person name="Tabata S."/>
        </authorList>
    </citation>
    <scope>NUCLEOTIDE SEQUENCE [LARGE SCALE GENOMIC DNA]</scope>
    <source>
        <strain>NIES-2133 / IAM M-273 / BP-1</strain>
    </source>
</reference>
<feature type="chain" id="PRO_0000416423" description="Bifunctional NAD(P)H-hydrate repair enzyme Nnr">
    <location>
        <begin position="1"/>
        <end position="505"/>
    </location>
</feature>
<feature type="domain" description="YjeF N-terminal">
    <location>
        <begin position="14"/>
        <end position="214"/>
    </location>
</feature>
<feature type="domain" description="YjeF C-terminal">
    <location>
        <begin position="226"/>
        <end position="500"/>
    </location>
</feature>
<feature type="region of interest" description="NAD(P)H-hydrate epimerase" evidence="1">
    <location>
        <begin position="1"/>
        <end position="219"/>
    </location>
</feature>
<feature type="region of interest" description="NADPHX 1; for epimerase activity" evidence="1">
    <location>
        <begin position="63"/>
        <end position="67"/>
    </location>
</feature>
<feature type="region of interest" description="NADPHX 1; for epimerase activity" evidence="1">
    <location>
        <begin position="128"/>
        <end position="134"/>
    </location>
</feature>
<feature type="region of interest" description="ADP-dependent (S)-NAD(P)H-hydrate dehydratase" evidence="1">
    <location>
        <begin position="227"/>
        <end position="505"/>
    </location>
</feature>
<feature type="region of interest" description="NADPHX 2; for dehydratase activity" evidence="1">
    <location>
        <begin position="376"/>
        <end position="382"/>
    </location>
</feature>
<feature type="binding site" evidence="1">
    <location>
        <position position="64"/>
    </location>
    <ligand>
        <name>K(+)</name>
        <dbReference type="ChEBI" id="CHEBI:29103"/>
    </ligand>
</feature>
<feature type="binding site" evidence="1">
    <location>
        <position position="124"/>
    </location>
    <ligand>
        <name>K(+)</name>
        <dbReference type="ChEBI" id="CHEBI:29103"/>
    </ligand>
</feature>
<feature type="binding site" evidence="1">
    <location>
        <position position="157"/>
    </location>
    <ligand>
        <name>(6S)-NADPHX</name>
        <dbReference type="ChEBI" id="CHEBI:64076"/>
        <label>1</label>
        <note>for epimerase activity</note>
    </ligand>
</feature>
<feature type="binding site" evidence="1">
    <location>
        <position position="160"/>
    </location>
    <ligand>
        <name>K(+)</name>
        <dbReference type="ChEBI" id="CHEBI:29103"/>
    </ligand>
</feature>
<feature type="binding site" evidence="1">
    <location>
        <position position="330"/>
    </location>
    <ligand>
        <name>(6S)-NADPHX</name>
        <dbReference type="ChEBI" id="CHEBI:64076"/>
        <label>2</label>
        <note>for dehydratase activity</note>
    </ligand>
</feature>
<feature type="binding site" evidence="1">
    <location>
        <begin position="412"/>
        <end position="416"/>
    </location>
    <ligand>
        <name>ADP</name>
        <dbReference type="ChEBI" id="CHEBI:456216"/>
    </ligand>
</feature>
<feature type="binding site" evidence="1">
    <location>
        <begin position="432"/>
        <end position="441"/>
    </location>
    <ligand>
        <name>ADP</name>
        <dbReference type="ChEBI" id="CHEBI:456216"/>
    </ligand>
</feature>
<feature type="binding site" evidence="1">
    <location>
        <position position="442"/>
    </location>
    <ligand>
        <name>(6S)-NADPHX</name>
        <dbReference type="ChEBI" id="CHEBI:64076"/>
        <label>2</label>
        <note>for dehydratase activity</note>
    </ligand>
</feature>
<accession>Q8DGC3</accession>
<sequence length="505" mass="53934">MKPTFPAIVTTAEMQAIEGAMFNGGLPIPALMEKVGQRLSHYLQAHFPTSQYPRVAVLAGPGHNGGDALVVARELWHRGYQVKLWQPFERLKPLTADHARYARFLGLPFVERVEALQEVDVIVDGLFGFGLERELTGELAHAIDEINTWPQPRVSIDVPSGLHSDTGAVLGTAIRADRTLCLGLWKRGLLVEEAQPWVGQGVLIPFDIPSVVIETALASAPRRYCLDDSCWQALPLSRSPITHKYQQGQLLLIGGSGQFGGSILLSALAARCTGVGMLVVAVPQSLKSLVLSRVPDAIVVGCPETPRGAIARLPEGLELGKFSAIACGPGLTPEAVSVVATVLRAETSLVLDADALNILATLSPWPLPSGTILTPHYGEFRRLFPDLVGTAGDRLDQVIAAARWSNAIVLLKGARTAIASARGDLWINPHSTPALARGGSGDVLTGLIGGLLAQQEALRATYGGVWWHAQAALEAEQQATSLGVYPEQLIAHLLPTLRRALAARV</sequence>